<feature type="propeptide" id="PRO_0000015271" evidence="1">
    <location>
        <begin position="1"/>
        <end position="112"/>
    </location>
</feature>
<feature type="chain" id="PRO_0000015272" description="Interleukin-1 alpha">
    <location>
        <begin position="113"/>
        <end position="271"/>
    </location>
</feature>
<feature type="region of interest" description="Nuclear localization signal (NLS)" evidence="3">
    <location>
        <begin position="82"/>
        <end position="86"/>
    </location>
</feature>
<feature type="modified residue" description="N6-acetyllysine" evidence="3">
    <location>
        <position position="82"/>
    </location>
</feature>
<feature type="modified residue" description="Phosphoserine" evidence="2">
    <location>
        <position position="87"/>
    </location>
</feature>
<feature type="glycosylation site" description="N-linked (GlcNAc...) asparagine" evidence="4">
    <location>
        <position position="102"/>
    </location>
</feature>
<feature type="glycosylation site" description="N-linked (GlcNAc...) asparagine" evidence="4">
    <location>
        <position position="121"/>
    </location>
</feature>
<feature type="glycosylation site" description="N-linked (GlcNAc...) asparagine" evidence="4">
    <location>
        <position position="137"/>
    </location>
</feature>
<feature type="glycosylation site" description="N-linked (GlcNAc...) asparagine" evidence="4">
    <location>
        <position position="141"/>
    </location>
</feature>
<feature type="glycosylation site" description="N-linked (GlcNAc...) asparagine" evidence="4">
    <location>
        <position position="211"/>
    </location>
</feature>
<protein>
    <recommendedName>
        <fullName>Interleukin-1 alpha</fullName>
        <shortName>IL-1 alpha</shortName>
    </recommendedName>
    <alternativeName>
        <fullName>Hematopoietin-1</fullName>
    </alternativeName>
</protein>
<comment type="function">
    <text evidence="3">Cytokine constitutively present intracellularly in nearly all resting non-hematopoietic cells that plays an important role in inflammation and bridges the innate and adaptive immune systems. After binding to its receptor IL1R1 together with its accessory protein IL1RAP, forms the high affinity interleukin-1 receptor complex. Signaling involves the recruitment of adapter molecules such as MYD88, IRAK1 or IRAK4. In turn, mediates the activation of NF-kappa-B and the three MAPK pathways p38, p42/p44 and JNK pathways. Within the cell, acts as an alarmin and cell death results in its liberation in the extracellular space after disruption of the cell membrane to induce inflammation and alert the host to injury or damage. In addition to its role as a danger signal, which occurs when the cytokine is passively released by cell necrosis, directly senses DNA damage and acts as signal for genotoxic stress without loss of cell integrity.</text>
</comment>
<comment type="subunit">
    <text evidence="3">Monomer. Interacts with TMED10; the interaction mediates the translocation from the cytoplasm into the ERGIC (endoplasmic reticulum-Golgi intermediate compartment) and thereby secretion. Interacts with IL1R1. Interacts with S100A13; this interaction is the first step in the export of IL1A, followed by direct translocation of this complex across the plasma membrane.</text>
</comment>
<comment type="subcellular location">
    <subcellularLocation>
        <location evidence="3">Nucleus</location>
    </subcellularLocation>
    <subcellularLocation>
        <location evidence="3">Cytoplasm</location>
    </subcellularLocation>
    <subcellularLocation>
        <location evidence="3">Secreted</location>
    </subcellularLocation>
    <text evidence="3">The lack of a specific hydrophobic segment in the precursor sequence suggests that IL-1 is released by damaged cells or is secreted by a mechanism differing from that used for other secretory proteins. The secretion is dependent on protein unfolding and facilitated by the cargo receptor TMED10; it results in protein translocation from the cytoplasm into the ERGIC (endoplasmic reticulum-Golgi intermediate compartment) followed by vesicle entry and secretion. Recruited to DNA damage sites and secreted after genotoxic stress.</text>
</comment>
<comment type="domain">
    <text>The similarity among the IL-1 precursors suggests that the amino ends of these proteins serve some as yet undefined function.</text>
</comment>
<comment type="PTM">
    <text evidence="3">Acetylated within its nuclear localization sequence, which impacts subcellular localization.</text>
</comment>
<comment type="PTM">
    <text evidence="3">Proteolytic processed by CAPN1 in a calcium-dependent manner. Cleavage from 31 kDa precursor to 18 kDa biologically active molecules.</text>
</comment>
<comment type="PTM">
    <text evidence="3">Phosphorylated. Phosphorylation greatly enhances susceptibility to digestion and promotes the conversion of pre-IL1A alpha to the biologically active IL1A.</text>
</comment>
<comment type="similarity">
    <text evidence="5">Belongs to the IL-1 family.</text>
</comment>
<proteinExistence type="evidence at transcript level"/>
<gene>
    <name type="primary">IL1A</name>
</gene>
<organism>
    <name type="scientific">Macaca mulatta</name>
    <name type="common">Rhesus macaque</name>
    <dbReference type="NCBI Taxonomy" id="9544"/>
    <lineage>
        <taxon>Eukaryota</taxon>
        <taxon>Metazoa</taxon>
        <taxon>Chordata</taxon>
        <taxon>Craniata</taxon>
        <taxon>Vertebrata</taxon>
        <taxon>Euteleostomi</taxon>
        <taxon>Mammalia</taxon>
        <taxon>Eutheria</taxon>
        <taxon>Euarchontoglires</taxon>
        <taxon>Primates</taxon>
        <taxon>Haplorrhini</taxon>
        <taxon>Catarrhini</taxon>
        <taxon>Cercopithecidae</taxon>
        <taxon>Cercopithecinae</taxon>
        <taxon>Macaca</taxon>
    </lineage>
</organism>
<sequence>MAKVPDMFEDLKNCYSENEEDSSSIDHLSLNQKSFYDVSYGPLHEGCMDQSVSLSISEISKTSKLTFKQSMVVVSTNGKVLKKRRLSLSQSITDNNLEAIANDSEEEIIKPRSAPFSFLSNMTYHFIRIIKHEFILNDTLNQTIIRANDQHLTAAAIHNLDEAVKFDMGAYTSSKDDTKVPVILRISKTQLYVSAQDEDQPVLLKEMPEINKTITGSETNFLFFWETHGTKNYFISVAHPNLFIATKHDNWVCLAKGLPSITDFQILENQA</sequence>
<evidence type="ECO:0000250" key="1"/>
<evidence type="ECO:0000250" key="2">
    <source>
        <dbReference type="UniProtKB" id="P01582"/>
    </source>
</evidence>
<evidence type="ECO:0000250" key="3">
    <source>
        <dbReference type="UniProtKB" id="P01583"/>
    </source>
</evidence>
<evidence type="ECO:0000255" key="4"/>
<evidence type="ECO:0000305" key="5"/>
<reference key="1">
    <citation type="journal article" date="1995" name="J. Immunol.">
        <title>Comparative sequence analysis of cytokine genes from human and nonhuman primates.</title>
        <authorList>
            <person name="Villinger F.J."/>
            <person name="Brar S.S."/>
            <person name="Mayne A.E."/>
            <person name="Chikkala N."/>
            <person name="Ansari A.A."/>
        </authorList>
    </citation>
    <scope>NUCLEOTIDE SEQUENCE [MRNA]</scope>
    <source>
        <tissue>Blood</tissue>
    </source>
</reference>
<dbReference type="EMBL" id="U19844">
    <property type="protein sequence ID" value="AAA86708.1"/>
    <property type="molecule type" value="mRNA"/>
</dbReference>
<dbReference type="RefSeq" id="NP_001036222.1">
    <property type="nucleotide sequence ID" value="NM_001042757.1"/>
</dbReference>
<dbReference type="SMR" id="P48089"/>
<dbReference type="FunCoup" id="P48089">
    <property type="interactions" value="636"/>
</dbReference>
<dbReference type="STRING" id="9544.ENSMMUP00000064548"/>
<dbReference type="GlyCosmos" id="P48089">
    <property type="glycosylation" value="5 sites, No reported glycans"/>
</dbReference>
<dbReference type="PaxDb" id="9544-ENSMMUP00000026006"/>
<dbReference type="GeneID" id="700193"/>
<dbReference type="KEGG" id="mcc:700193"/>
<dbReference type="CTD" id="3552"/>
<dbReference type="eggNOG" id="ENOG502T3DD">
    <property type="taxonomic scope" value="Eukaryota"/>
</dbReference>
<dbReference type="InParanoid" id="P48089"/>
<dbReference type="OrthoDB" id="9451248at2759"/>
<dbReference type="Proteomes" id="UP000006718">
    <property type="component" value="Unassembled WGS sequence"/>
</dbReference>
<dbReference type="GO" id="GO:0005829">
    <property type="term" value="C:cytosol"/>
    <property type="evidence" value="ECO:0000250"/>
    <property type="project" value="UniProtKB"/>
</dbReference>
<dbReference type="GO" id="GO:0005615">
    <property type="term" value="C:extracellular space"/>
    <property type="evidence" value="ECO:0000250"/>
    <property type="project" value="UniProtKB"/>
</dbReference>
<dbReference type="GO" id="GO:0005634">
    <property type="term" value="C:nucleus"/>
    <property type="evidence" value="ECO:0007669"/>
    <property type="project" value="UniProtKB-SubCell"/>
</dbReference>
<dbReference type="GO" id="GO:0005507">
    <property type="term" value="F:copper ion binding"/>
    <property type="evidence" value="ECO:0000250"/>
    <property type="project" value="UniProtKB"/>
</dbReference>
<dbReference type="GO" id="GO:0005125">
    <property type="term" value="F:cytokine activity"/>
    <property type="evidence" value="ECO:0000318"/>
    <property type="project" value="GO_Central"/>
</dbReference>
<dbReference type="GO" id="GO:0005149">
    <property type="term" value="F:interleukin-1 receptor binding"/>
    <property type="evidence" value="ECO:0007669"/>
    <property type="project" value="InterPro"/>
</dbReference>
<dbReference type="GO" id="GO:0034605">
    <property type="term" value="P:cellular response to heat"/>
    <property type="evidence" value="ECO:0000250"/>
    <property type="project" value="UniProtKB"/>
</dbReference>
<dbReference type="GO" id="GO:0071222">
    <property type="term" value="P:cellular response to lipopolysaccharide"/>
    <property type="evidence" value="ECO:0000318"/>
    <property type="project" value="GO_Central"/>
</dbReference>
<dbReference type="GO" id="GO:0019221">
    <property type="term" value="P:cytokine-mediated signaling pathway"/>
    <property type="evidence" value="ECO:0000318"/>
    <property type="project" value="GO_Central"/>
</dbReference>
<dbReference type="GO" id="GO:0001660">
    <property type="term" value="P:fever generation"/>
    <property type="evidence" value="ECO:0007669"/>
    <property type="project" value="UniProtKB-KW"/>
</dbReference>
<dbReference type="GO" id="GO:0006955">
    <property type="term" value="P:immune response"/>
    <property type="evidence" value="ECO:0000318"/>
    <property type="project" value="GO_Central"/>
</dbReference>
<dbReference type="GO" id="GO:0006954">
    <property type="term" value="P:inflammatory response"/>
    <property type="evidence" value="ECO:0000318"/>
    <property type="project" value="GO_Central"/>
</dbReference>
<dbReference type="GO" id="GO:0043123">
    <property type="term" value="P:positive regulation of canonical NF-kappaB signal transduction"/>
    <property type="evidence" value="ECO:0000318"/>
    <property type="project" value="GO_Central"/>
</dbReference>
<dbReference type="GO" id="GO:0051781">
    <property type="term" value="P:positive regulation of cell division"/>
    <property type="evidence" value="ECO:0007669"/>
    <property type="project" value="UniProtKB-KW"/>
</dbReference>
<dbReference type="GO" id="GO:0001819">
    <property type="term" value="P:positive regulation of cytokine production"/>
    <property type="evidence" value="ECO:0007669"/>
    <property type="project" value="UniProtKB-ARBA"/>
</dbReference>
<dbReference type="GO" id="GO:0033092">
    <property type="term" value="P:positive regulation of immature T cell proliferation in thymus"/>
    <property type="evidence" value="ECO:0000318"/>
    <property type="project" value="GO_Central"/>
</dbReference>
<dbReference type="GO" id="GO:0070372">
    <property type="term" value="P:regulation of ERK1 and ERK2 cascade"/>
    <property type="evidence" value="ECO:0000318"/>
    <property type="project" value="GO_Central"/>
</dbReference>
<dbReference type="GO" id="GO:0046688">
    <property type="term" value="P:response to copper ion"/>
    <property type="evidence" value="ECO:0000250"/>
    <property type="project" value="UniProtKB"/>
</dbReference>
<dbReference type="CDD" id="cd23295">
    <property type="entry name" value="beta-trefoil_IL1A"/>
    <property type="match status" value="1"/>
</dbReference>
<dbReference type="FunFam" id="2.80.10.50:FF:000049">
    <property type="entry name" value="Interleukin-1 alpha"/>
    <property type="match status" value="1"/>
</dbReference>
<dbReference type="Gene3D" id="2.80.10.50">
    <property type="match status" value="1"/>
</dbReference>
<dbReference type="InterPro" id="IPR003295">
    <property type="entry name" value="IL-1_alpha"/>
</dbReference>
<dbReference type="InterPro" id="IPR020877">
    <property type="entry name" value="IL-1_CS"/>
</dbReference>
<dbReference type="InterPro" id="IPR000975">
    <property type="entry name" value="IL-1_fam"/>
</dbReference>
<dbReference type="InterPro" id="IPR003502">
    <property type="entry name" value="IL-1_propep"/>
</dbReference>
<dbReference type="InterPro" id="IPR008996">
    <property type="entry name" value="IL1/FGF"/>
</dbReference>
<dbReference type="PANTHER" id="PTHR10078:SF33">
    <property type="entry name" value="INTERLEUKIN-1 ALPHA"/>
    <property type="match status" value="1"/>
</dbReference>
<dbReference type="PANTHER" id="PTHR10078">
    <property type="entry name" value="INTERLEUKIN-1 FAMILY MEMBER"/>
    <property type="match status" value="1"/>
</dbReference>
<dbReference type="Pfam" id="PF00340">
    <property type="entry name" value="IL1"/>
    <property type="match status" value="1"/>
</dbReference>
<dbReference type="Pfam" id="PF02394">
    <property type="entry name" value="IL1_propep"/>
    <property type="match status" value="1"/>
</dbReference>
<dbReference type="PRINTS" id="PR00264">
    <property type="entry name" value="INTERLEUKIN1"/>
</dbReference>
<dbReference type="PRINTS" id="PR01358">
    <property type="entry name" value="INTRLEUKIN1A"/>
</dbReference>
<dbReference type="PRINTS" id="PR01357">
    <property type="entry name" value="INTRLEUKN1AB"/>
</dbReference>
<dbReference type="SMART" id="SM00125">
    <property type="entry name" value="IL1"/>
    <property type="match status" value="1"/>
</dbReference>
<dbReference type="SUPFAM" id="SSF50353">
    <property type="entry name" value="Cytokine"/>
    <property type="match status" value="1"/>
</dbReference>
<dbReference type="PROSITE" id="PS00253">
    <property type="entry name" value="INTERLEUKIN_1"/>
    <property type="match status" value="1"/>
</dbReference>
<accession>P48089</accession>
<name>IL1A_MACMU</name>
<keyword id="KW-0007">Acetylation</keyword>
<keyword id="KW-0202">Cytokine</keyword>
<keyword id="KW-0963">Cytoplasm</keyword>
<keyword id="KW-0325">Glycoprotein</keyword>
<keyword id="KW-0395">Inflammatory response</keyword>
<keyword id="KW-0497">Mitogen</keyword>
<keyword id="KW-0539">Nucleus</keyword>
<keyword id="KW-0597">Phosphoprotein</keyword>
<keyword id="KW-0666">Pyrogen</keyword>
<keyword id="KW-1185">Reference proteome</keyword>
<keyword id="KW-0964">Secreted</keyword>